<reference key="1">
    <citation type="journal article" date="2002" name="Genome Res.">
        <title>A complete sequence of the T. tengcongensis genome.</title>
        <authorList>
            <person name="Bao Q."/>
            <person name="Tian Y."/>
            <person name="Li W."/>
            <person name="Xu Z."/>
            <person name="Xuan Z."/>
            <person name="Hu S."/>
            <person name="Dong W."/>
            <person name="Yang J."/>
            <person name="Chen Y."/>
            <person name="Xue Y."/>
            <person name="Xu Y."/>
            <person name="Lai X."/>
            <person name="Huang L."/>
            <person name="Dong X."/>
            <person name="Ma Y."/>
            <person name="Ling L."/>
            <person name="Tan H."/>
            <person name="Chen R."/>
            <person name="Wang J."/>
            <person name="Yu J."/>
            <person name="Yang H."/>
        </authorList>
    </citation>
    <scope>NUCLEOTIDE SEQUENCE [LARGE SCALE GENOMIC DNA]</scope>
    <source>
        <strain>DSM 15242 / JCM 11007 / NBRC 100824 / MB4</strain>
    </source>
</reference>
<proteinExistence type="inferred from homology"/>
<dbReference type="EC" id="4.2.1.9" evidence="1"/>
<dbReference type="EMBL" id="AE008691">
    <property type="protein sequence ID" value="AAM23337.1"/>
    <property type="molecule type" value="Genomic_DNA"/>
</dbReference>
<dbReference type="RefSeq" id="WP_011024553.1">
    <property type="nucleotide sequence ID" value="NC_003869.1"/>
</dbReference>
<dbReference type="SMR" id="Q8RDJ9"/>
<dbReference type="STRING" id="273068.TTE0020"/>
<dbReference type="KEGG" id="tte:TTE0020"/>
<dbReference type="eggNOG" id="COG0129">
    <property type="taxonomic scope" value="Bacteria"/>
</dbReference>
<dbReference type="HOGENOM" id="CLU_014271_4_2_9"/>
<dbReference type="OrthoDB" id="9807077at2"/>
<dbReference type="UniPathway" id="UPA00047">
    <property type="reaction ID" value="UER00057"/>
</dbReference>
<dbReference type="UniPathway" id="UPA00049">
    <property type="reaction ID" value="UER00061"/>
</dbReference>
<dbReference type="Proteomes" id="UP000000555">
    <property type="component" value="Chromosome"/>
</dbReference>
<dbReference type="GO" id="GO:0005829">
    <property type="term" value="C:cytosol"/>
    <property type="evidence" value="ECO:0007669"/>
    <property type="project" value="TreeGrafter"/>
</dbReference>
<dbReference type="GO" id="GO:0051537">
    <property type="term" value="F:2 iron, 2 sulfur cluster binding"/>
    <property type="evidence" value="ECO:0007669"/>
    <property type="project" value="UniProtKB-UniRule"/>
</dbReference>
<dbReference type="GO" id="GO:0004160">
    <property type="term" value="F:dihydroxy-acid dehydratase activity"/>
    <property type="evidence" value="ECO:0007669"/>
    <property type="project" value="UniProtKB-UniRule"/>
</dbReference>
<dbReference type="GO" id="GO:0000287">
    <property type="term" value="F:magnesium ion binding"/>
    <property type="evidence" value="ECO:0007669"/>
    <property type="project" value="UniProtKB-UniRule"/>
</dbReference>
<dbReference type="GO" id="GO:0009097">
    <property type="term" value="P:isoleucine biosynthetic process"/>
    <property type="evidence" value="ECO:0007669"/>
    <property type="project" value="UniProtKB-UniRule"/>
</dbReference>
<dbReference type="GO" id="GO:0009099">
    <property type="term" value="P:L-valine biosynthetic process"/>
    <property type="evidence" value="ECO:0007669"/>
    <property type="project" value="UniProtKB-UniRule"/>
</dbReference>
<dbReference type="FunFam" id="3.50.30.80:FF:000001">
    <property type="entry name" value="Dihydroxy-acid dehydratase"/>
    <property type="match status" value="1"/>
</dbReference>
<dbReference type="Gene3D" id="3.50.30.80">
    <property type="entry name" value="IlvD/EDD C-terminal domain-like"/>
    <property type="match status" value="1"/>
</dbReference>
<dbReference type="HAMAP" id="MF_00012">
    <property type="entry name" value="IlvD"/>
    <property type="match status" value="1"/>
</dbReference>
<dbReference type="InterPro" id="IPR042096">
    <property type="entry name" value="Dihydro-acid_dehy_C"/>
</dbReference>
<dbReference type="InterPro" id="IPR004404">
    <property type="entry name" value="DihydroxyA_deHydtase"/>
</dbReference>
<dbReference type="InterPro" id="IPR020558">
    <property type="entry name" value="DiOHA_6PGluconate_deHydtase_CS"/>
</dbReference>
<dbReference type="InterPro" id="IPR056740">
    <property type="entry name" value="ILV_EDD_C"/>
</dbReference>
<dbReference type="InterPro" id="IPR000581">
    <property type="entry name" value="ILV_EDD_N"/>
</dbReference>
<dbReference type="InterPro" id="IPR037237">
    <property type="entry name" value="IlvD/EDD_N"/>
</dbReference>
<dbReference type="NCBIfam" id="TIGR00110">
    <property type="entry name" value="ilvD"/>
    <property type="match status" value="1"/>
</dbReference>
<dbReference type="NCBIfam" id="NF002068">
    <property type="entry name" value="PRK00911.1"/>
    <property type="match status" value="1"/>
</dbReference>
<dbReference type="PANTHER" id="PTHR43661">
    <property type="entry name" value="D-XYLONATE DEHYDRATASE"/>
    <property type="match status" value="1"/>
</dbReference>
<dbReference type="PANTHER" id="PTHR43661:SF3">
    <property type="entry name" value="D-XYLONATE DEHYDRATASE YAGF-RELATED"/>
    <property type="match status" value="1"/>
</dbReference>
<dbReference type="Pfam" id="PF24877">
    <property type="entry name" value="ILV_EDD_C"/>
    <property type="match status" value="1"/>
</dbReference>
<dbReference type="Pfam" id="PF00920">
    <property type="entry name" value="ILVD_EDD_N"/>
    <property type="match status" value="1"/>
</dbReference>
<dbReference type="SUPFAM" id="SSF143975">
    <property type="entry name" value="IlvD/EDD N-terminal domain-like"/>
    <property type="match status" value="1"/>
</dbReference>
<dbReference type="SUPFAM" id="SSF52016">
    <property type="entry name" value="LeuD/IlvD-like"/>
    <property type="match status" value="1"/>
</dbReference>
<dbReference type="PROSITE" id="PS00886">
    <property type="entry name" value="ILVD_EDD_1"/>
    <property type="match status" value="1"/>
</dbReference>
<dbReference type="PROSITE" id="PS00887">
    <property type="entry name" value="ILVD_EDD_2"/>
    <property type="match status" value="1"/>
</dbReference>
<organism>
    <name type="scientific">Caldanaerobacter subterraneus subsp. tengcongensis (strain DSM 15242 / JCM 11007 / NBRC 100824 / MB4)</name>
    <name type="common">Thermoanaerobacter tengcongensis</name>
    <dbReference type="NCBI Taxonomy" id="273068"/>
    <lineage>
        <taxon>Bacteria</taxon>
        <taxon>Bacillati</taxon>
        <taxon>Bacillota</taxon>
        <taxon>Clostridia</taxon>
        <taxon>Thermoanaerobacterales</taxon>
        <taxon>Thermoanaerobacteraceae</taxon>
        <taxon>Caldanaerobacter</taxon>
    </lineage>
</organism>
<comment type="function">
    <text evidence="1">Functions in the biosynthesis of branched-chain amino acids. Catalyzes the dehydration of (2R,3R)-2,3-dihydroxy-3-methylpentanoate (2,3-dihydroxy-3-methylvalerate) into 2-oxo-3-methylpentanoate (2-oxo-3-methylvalerate) and of (2R)-2,3-dihydroxy-3-methylbutanoate (2,3-dihydroxyisovalerate) into 2-oxo-3-methylbutanoate (2-oxoisovalerate), the penultimate precursor to L-isoleucine and L-valine, respectively.</text>
</comment>
<comment type="catalytic activity">
    <reaction evidence="1">
        <text>(2R)-2,3-dihydroxy-3-methylbutanoate = 3-methyl-2-oxobutanoate + H2O</text>
        <dbReference type="Rhea" id="RHEA:24809"/>
        <dbReference type="ChEBI" id="CHEBI:11851"/>
        <dbReference type="ChEBI" id="CHEBI:15377"/>
        <dbReference type="ChEBI" id="CHEBI:49072"/>
        <dbReference type="EC" id="4.2.1.9"/>
    </reaction>
    <physiologicalReaction direction="left-to-right" evidence="1">
        <dbReference type="Rhea" id="RHEA:24810"/>
    </physiologicalReaction>
</comment>
<comment type="catalytic activity">
    <reaction evidence="1">
        <text>(2R,3R)-2,3-dihydroxy-3-methylpentanoate = (S)-3-methyl-2-oxopentanoate + H2O</text>
        <dbReference type="Rhea" id="RHEA:27694"/>
        <dbReference type="ChEBI" id="CHEBI:15377"/>
        <dbReference type="ChEBI" id="CHEBI:35146"/>
        <dbReference type="ChEBI" id="CHEBI:49258"/>
        <dbReference type="EC" id="4.2.1.9"/>
    </reaction>
    <physiologicalReaction direction="left-to-right" evidence="1">
        <dbReference type="Rhea" id="RHEA:27695"/>
    </physiologicalReaction>
</comment>
<comment type="cofactor">
    <cofactor evidence="1">
        <name>[2Fe-2S] cluster</name>
        <dbReference type="ChEBI" id="CHEBI:190135"/>
    </cofactor>
    <text evidence="1">Binds 1 [2Fe-2S] cluster per subunit. This cluster acts as a Lewis acid cofactor.</text>
</comment>
<comment type="cofactor">
    <cofactor evidence="1">
        <name>Mg(2+)</name>
        <dbReference type="ChEBI" id="CHEBI:18420"/>
    </cofactor>
</comment>
<comment type="pathway">
    <text evidence="1">Amino-acid biosynthesis; L-isoleucine biosynthesis; L-isoleucine from 2-oxobutanoate: step 3/4.</text>
</comment>
<comment type="pathway">
    <text evidence="1">Amino-acid biosynthesis; L-valine biosynthesis; L-valine from pyruvate: step 3/4.</text>
</comment>
<comment type="subunit">
    <text evidence="1">Homodimer.</text>
</comment>
<comment type="similarity">
    <text evidence="1">Belongs to the IlvD/Edd family.</text>
</comment>
<keyword id="KW-0001">2Fe-2S</keyword>
<keyword id="KW-0028">Amino-acid biosynthesis</keyword>
<keyword id="KW-0100">Branched-chain amino acid biosynthesis</keyword>
<keyword id="KW-0408">Iron</keyword>
<keyword id="KW-0411">Iron-sulfur</keyword>
<keyword id="KW-0456">Lyase</keyword>
<keyword id="KW-0460">Magnesium</keyword>
<keyword id="KW-0479">Metal-binding</keyword>
<keyword id="KW-1185">Reference proteome</keyword>
<name>ILVD_CALS4</name>
<sequence length="556" mass="58994">MRSDAVKKGVERAPHRSLLYALGLTDEELKRPIIGVANSKNEIIPGHIHLDKIAEAVKAGIRMAGGTPVEFSTIGVCDGIAMGHGGMKYSLGSREVIADSIEIMAMAHGFDGIVLIPNCDKIVPGMLMAAARLDIPAIVVSGGPMLAGICDGTTCDLSTVFEAVGALKAGKITEEEFYSIERNACPTCGSCSGMFTANTMNCLTEALGLGLPGNGTIPAVYSERIRLAKEAGMKIVELVERNITPSQILTKEAFVNAFSLDMALGGSTNTVLHLKAIAHEAGVDIPLEEINDISDRVPNLCKLSPAGKYHIEDLHFAGGVSAVLKELSKAGLLHLDALTVTGRTLGENIKDAKVRNRDVIRTIEDPYSKTGGIAILFGNIAREGAVVKASAVSPEMLRHEGPARVFDSEEEAIEAIYGGKIQKGDVVVIRYEGPKGGPGMREMLSPTSALAGMGLDKDVALITDGRFSGATRGASIGHVSPEAMEGGEIAIIEDGDIIEIDIPARKINVKLSDEEIKKRMANWKRPEPKIKKGYMARYTREVTSGSKGAVFREGGV</sequence>
<evidence type="ECO:0000255" key="1">
    <source>
        <dbReference type="HAMAP-Rule" id="MF_00012"/>
    </source>
</evidence>
<accession>Q8RDJ9</accession>
<gene>
    <name evidence="1" type="primary">ilvD</name>
    <name type="ordered locus">TTE0020</name>
</gene>
<protein>
    <recommendedName>
        <fullName evidence="1">Dihydroxy-acid dehydratase</fullName>
        <shortName evidence="1">DAD</shortName>
        <ecNumber evidence="1">4.2.1.9</ecNumber>
    </recommendedName>
</protein>
<feature type="chain" id="PRO_0000103522" description="Dihydroxy-acid dehydratase">
    <location>
        <begin position="1"/>
        <end position="556"/>
    </location>
</feature>
<feature type="active site" description="Proton acceptor" evidence="1">
    <location>
        <position position="468"/>
    </location>
</feature>
<feature type="binding site" evidence="1">
    <location>
        <position position="78"/>
    </location>
    <ligand>
        <name>Mg(2+)</name>
        <dbReference type="ChEBI" id="CHEBI:18420"/>
    </ligand>
</feature>
<feature type="binding site" evidence="1">
    <location>
        <position position="119"/>
    </location>
    <ligand>
        <name>[2Fe-2S] cluster</name>
        <dbReference type="ChEBI" id="CHEBI:190135"/>
    </ligand>
</feature>
<feature type="binding site" evidence="1">
    <location>
        <position position="120"/>
    </location>
    <ligand>
        <name>Mg(2+)</name>
        <dbReference type="ChEBI" id="CHEBI:18420"/>
    </ligand>
</feature>
<feature type="binding site" description="via carbamate group" evidence="1">
    <location>
        <position position="121"/>
    </location>
    <ligand>
        <name>Mg(2+)</name>
        <dbReference type="ChEBI" id="CHEBI:18420"/>
    </ligand>
</feature>
<feature type="binding site" evidence="1">
    <location>
        <position position="191"/>
    </location>
    <ligand>
        <name>[2Fe-2S] cluster</name>
        <dbReference type="ChEBI" id="CHEBI:190135"/>
    </ligand>
</feature>
<feature type="binding site" evidence="1">
    <location>
        <position position="442"/>
    </location>
    <ligand>
        <name>Mg(2+)</name>
        <dbReference type="ChEBI" id="CHEBI:18420"/>
    </ligand>
</feature>
<feature type="modified residue" description="N6-carboxylysine" evidence="1">
    <location>
        <position position="121"/>
    </location>
</feature>